<keyword id="KW-0238">DNA-binding</keyword>
<keyword id="KW-0539">Nucleus</keyword>
<keyword id="KW-1185">Reference proteome</keyword>
<keyword id="KW-0804">Transcription</keyword>
<keyword id="KW-0805">Transcription regulation</keyword>
<protein>
    <recommendedName>
        <fullName evidence="10">AT-hook motif nuclear-localized protein 2</fullName>
    </recommendedName>
</protein>
<organism>
    <name type="scientific">Arabidopsis thaliana</name>
    <name type="common">Mouse-ear cress</name>
    <dbReference type="NCBI Taxonomy" id="3702"/>
    <lineage>
        <taxon>Eukaryota</taxon>
        <taxon>Viridiplantae</taxon>
        <taxon>Streptophyta</taxon>
        <taxon>Embryophyta</taxon>
        <taxon>Tracheophyta</taxon>
        <taxon>Spermatophyta</taxon>
        <taxon>Magnoliopsida</taxon>
        <taxon>eudicotyledons</taxon>
        <taxon>Gunneridae</taxon>
        <taxon>Pentapetalae</taxon>
        <taxon>rosids</taxon>
        <taxon>malvids</taxon>
        <taxon>Brassicales</taxon>
        <taxon>Brassicaceae</taxon>
        <taxon>Camelineae</taxon>
        <taxon>Arabidopsis</taxon>
    </lineage>
</organism>
<accession>O49658</accession>
<gene>
    <name evidence="6" type="primary">AHL2</name>
    <name evidence="8" type="ordered locus">At4g22770</name>
    <name evidence="9" type="ORF">T12H17.160</name>
</gene>
<comment type="function">
    <text evidence="1">Transcription factor that specifically binds AT-rich DNA sequences related to the nuclear matrix attachment regions (MARs).</text>
</comment>
<comment type="subcellular location">
    <subcellularLocation>
        <location evidence="1">Nucleus</location>
    </subcellularLocation>
</comment>
<comment type="domain">
    <text evidence="5">The PPC domain mediates interactions between AHL proteins.</text>
</comment>
<reference key="1">
    <citation type="journal article" date="1999" name="Nature">
        <title>Sequence and analysis of chromosome 4 of the plant Arabidopsis thaliana.</title>
        <authorList>
            <person name="Mayer K.F.X."/>
            <person name="Schueller C."/>
            <person name="Wambutt R."/>
            <person name="Murphy G."/>
            <person name="Volckaert G."/>
            <person name="Pohl T."/>
            <person name="Duesterhoeft A."/>
            <person name="Stiekema W."/>
            <person name="Entian K.-D."/>
            <person name="Terryn N."/>
            <person name="Harris B."/>
            <person name="Ansorge W."/>
            <person name="Brandt P."/>
            <person name="Grivell L.A."/>
            <person name="Rieger M."/>
            <person name="Weichselgartner M."/>
            <person name="de Simone V."/>
            <person name="Obermaier B."/>
            <person name="Mache R."/>
            <person name="Mueller M."/>
            <person name="Kreis M."/>
            <person name="Delseny M."/>
            <person name="Puigdomenech P."/>
            <person name="Watson M."/>
            <person name="Schmidtheini T."/>
            <person name="Reichert B."/>
            <person name="Portetelle D."/>
            <person name="Perez-Alonso M."/>
            <person name="Boutry M."/>
            <person name="Bancroft I."/>
            <person name="Vos P."/>
            <person name="Hoheisel J."/>
            <person name="Zimmermann W."/>
            <person name="Wedler H."/>
            <person name="Ridley P."/>
            <person name="Langham S.-A."/>
            <person name="McCullagh B."/>
            <person name="Bilham L."/>
            <person name="Robben J."/>
            <person name="van der Schueren J."/>
            <person name="Grymonprez B."/>
            <person name="Chuang Y.-J."/>
            <person name="Vandenbussche F."/>
            <person name="Braeken M."/>
            <person name="Weltjens I."/>
            <person name="Voet M."/>
            <person name="Bastiaens I."/>
            <person name="Aert R."/>
            <person name="Defoor E."/>
            <person name="Weitzenegger T."/>
            <person name="Bothe G."/>
            <person name="Ramsperger U."/>
            <person name="Hilbert H."/>
            <person name="Braun M."/>
            <person name="Holzer E."/>
            <person name="Brandt A."/>
            <person name="Peters S."/>
            <person name="van Staveren M."/>
            <person name="Dirkse W."/>
            <person name="Mooijman P."/>
            <person name="Klein Lankhorst R."/>
            <person name="Rose M."/>
            <person name="Hauf J."/>
            <person name="Koetter P."/>
            <person name="Berneiser S."/>
            <person name="Hempel S."/>
            <person name="Feldpausch M."/>
            <person name="Lamberth S."/>
            <person name="Van den Daele H."/>
            <person name="De Keyser A."/>
            <person name="Buysshaert C."/>
            <person name="Gielen J."/>
            <person name="Villarroel R."/>
            <person name="De Clercq R."/>
            <person name="van Montagu M."/>
            <person name="Rogers J."/>
            <person name="Cronin A."/>
            <person name="Quail M.A."/>
            <person name="Bray-Allen S."/>
            <person name="Clark L."/>
            <person name="Doggett J."/>
            <person name="Hall S."/>
            <person name="Kay M."/>
            <person name="Lennard N."/>
            <person name="McLay K."/>
            <person name="Mayes R."/>
            <person name="Pettett A."/>
            <person name="Rajandream M.A."/>
            <person name="Lyne M."/>
            <person name="Benes V."/>
            <person name="Rechmann S."/>
            <person name="Borkova D."/>
            <person name="Bloecker H."/>
            <person name="Scharfe M."/>
            <person name="Grimm M."/>
            <person name="Loehnert T.-H."/>
            <person name="Dose S."/>
            <person name="de Haan M."/>
            <person name="Maarse A.C."/>
            <person name="Schaefer M."/>
            <person name="Mueller-Auer S."/>
            <person name="Gabel C."/>
            <person name="Fuchs M."/>
            <person name="Fartmann B."/>
            <person name="Granderath K."/>
            <person name="Dauner D."/>
            <person name="Herzl A."/>
            <person name="Neumann S."/>
            <person name="Argiriou A."/>
            <person name="Vitale D."/>
            <person name="Liguori R."/>
            <person name="Piravandi E."/>
            <person name="Massenet O."/>
            <person name="Quigley F."/>
            <person name="Clabauld G."/>
            <person name="Muendlein A."/>
            <person name="Felber R."/>
            <person name="Schnabl S."/>
            <person name="Hiller R."/>
            <person name="Schmidt W."/>
            <person name="Lecharny A."/>
            <person name="Aubourg S."/>
            <person name="Chefdor F."/>
            <person name="Cooke R."/>
            <person name="Berger C."/>
            <person name="Monfort A."/>
            <person name="Casacuberta E."/>
            <person name="Gibbons T."/>
            <person name="Weber N."/>
            <person name="Vandenbol M."/>
            <person name="Bargues M."/>
            <person name="Terol J."/>
            <person name="Torres A."/>
            <person name="Perez-Perez A."/>
            <person name="Purnelle B."/>
            <person name="Bent E."/>
            <person name="Johnson S."/>
            <person name="Tacon D."/>
            <person name="Jesse T."/>
            <person name="Heijnen L."/>
            <person name="Schwarz S."/>
            <person name="Scholler P."/>
            <person name="Heber S."/>
            <person name="Francs P."/>
            <person name="Bielke C."/>
            <person name="Frishman D."/>
            <person name="Haase D."/>
            <person name="Lemcke K."/>
            <person name="Mewes H.-W."/>
            <person name="Stocker S."/>
            <person name="Zaccaria P."/>
            <person name="Bevan M."/>
            <person name="Wilson R.K."/>
            <person name="de la Bastide M."/>
            <person name="Habermann K."/>
            <person name="Parnell L."/>
            <person name="Dedhia N."/>
            <person name="Gnoj L."/>
            <person name="Schutz K."/>
            <person name="Huang E."/>
            <person name="Spiegel L."/>
            <person name="Sekhon M."/>
            <person name="Murray J."/>
            <person name="Sheet P."/>
            <person name="Cordes M."/>
            <person name="Abu-Threideh J."/>
            <person name="Stoneking T."/>
            <person name="Kalicki J."/>
            <person name="Graves T."/>
            <person name="Harmon G."/>
            <person name="Edwards J."/>
            <person name="Latreille P."/>
            <person name="Courtney L."/>
            <person name="Cloud J."/>
            <person name="Abbott A."/>
            <person name="Scott K."/>
            <person name="Johnson D."/>
            <person name="Minx P."/>
            <person name="Bentley D."/>
            <person name="Fulton B."/>
            <person name="Miller N."/>
            <person name="Greco T."/>
            <person name="Kemp K."/>
            <person name="Kramer J."/>
            <person name="Fulton L."/>
            <person name="Mardis E."/>
            <person name="Dante M."/>
            <person name="Pepin K."/>
            <person name="Hillier L.W."/>
            <person name="Nelson J."/>
            <person name="Spieth J."/>
            <person name="Ryan E."/>
            <person name="Andrews S."/>
            <person name="Geisel C."/>
            <person name="Layman D."/>
            <person name="Du H."/>
            <person name="Ali J."/>
            <person name="Berghoff A."/>
            <person name="Jones K."/>
            <person name="Drone K."/>
            <person name="Cotton M."/>
            <person name="Joshu C."/>
            <person name="Antonoiu B."/>
            <person name="Zidanic M."/>
            <person name="Strong C."/>
            <person name="Sun H."/>
            <person name="Lamar B."/>
            <person name="Yordan C."/>
            <person name="Ma P."/>
            <person name="Zhong J."/>
            <person name="Preston R."/>
            <person name="Vil D."/>
            <person name="Shekher M."/>
            <person name="Matero A."/>
            <person name="Shah R."/>
            <person name="Swaby I.K."/>
            <person name="O'Shaughnessy A."/>
            <person name="Rodriguez M."/>
            <person name="Hoffman J."/>
            <person name="Till S."/>
            <person name="Granat S."/>
            <person name="Shohdy N."/>
            <person name="Hasegawa A."/>
            <person name="Hameed A."/>
            <person name="Lodhi M."/>
            <person name="Johnson A."/>
            <person name="Chen E."/>
            <person name="Marra M.A."/>
            <person name="Martienssen R."/>
            <person name="McCombie W.R."/>
        </authorList>
    </citation>
    <scope>NUCLEOTIDE SEQUENCE [LARGE SCALE GENOMIC DNA]</scope>
    <source>
        <strain>cv. Columbia</strain>
    </source>
</reference>
<reference key="2">
    <citation type="journal article" date="2017" name="Plant J.">
        <title>Araport11: a complete reannotation of the Arabidopsis thaliana reference genome.</title>
        <authorList>
            <person name="Cheng C.Y."/>
            <person name="Krishnakumar V."/>
            <person name="Chan A.P."/>
            <person name="Thibaud-Nissen F."/>
            <person name="Schobel S."/>
            <person name="Town C.D."/>
        </authorList>
    </citation>
    <scope>GENOME REANNOTATION</scope>
    <source>
        <strain>cv. Columbia</strain>
    </source>
</reference>
<reference key="3">
    <citation type="submission" date="2006-08" db="EMBL/GenBank/DDBJ databases">
        <title>Arabidopsis ORF Clones.</title>
        <authorList>
            <person name="Quinitio C."/>
            <person name="Chen H."/>
            <person name="Kim C.J."/>
            <person name="Shinn P."/>
            <person name="Ecker J.R."/>
        </authorList>
    </citation>
    <scope>NUCLEOTIDE SEQUENCE [LARGE SCALE MRNA]</scope>
    <source>
        <strain>cv. Columbia</strain>
    </source>
</reference>
<reference key="4">
    <citation type="submission" date="2009-03" db="EMBL/GenBank/DDBJ databases">
        <title>ORF cloning and analysis of Arabidopsis transcription factor genes.</title>
        <authorList>
            <person name="Fujita M."/>
            <person name="Mizukado S."/>
            <person name="Seki M."/>
            <person name="Shinozaki K."/>
            <person name="Mitsuda N."/>
            <person name="Takiguchi Y."/>
            <person name="Takagi M."/>
        </authorList>
    </citation>
    <scope>NUCLEOTIDE SEQUENCE [LARGE SCALE MRNA]</scope>
</reference>
<reference key="5">
    <citation type="submission" date="2002-03" db="EMBL/GenBank/DDBJ databases">
        <title>Full-length cDNA from Arabidopsis thaliana.</title>
        <authorList>
            <person name="Brover V.V."/>
            <person name="Troukhan M.E."/>
            <person name="Alexandrov N.A."/>
            <person name="Lu Y.-P."/>
            <person name="Flavell R.B."/>
            <person name="Feldmann K.A."/>
        </authorList>
    </citation>
    <scope>NUCLEOTIDE SEQUENCE [LARGE SCALE MRNA]</scope>
</reference>
<reference key="6">
    <citation type="journal article" date="2004" name="Plant Mol. Biol.">
        <title>Identification of a novel plant MAR DNA binding protein localized on chromosomal surfaces.</title>
        <authorList>
            <person name="Fujimoto S."/>
            <person name="Matsunaga S."/>
            <person name="Yonemura M."/>
            <person name="Uchiyama S."/>
            <person name="Azuma T."/>
            <person name="Fukui K."/>
        </authorList>
    </citation>
    <scope>IDENTIFICATION</scope>
    <scope>GENE FAMILY</scope>
    <scope>NOMENCLATURE</scope>
    <source>
        <strain>cv. Columbia</strain>
    </source>
</reference>
<reference key="7">
    <citation type="journal article" date="2013" name="Proc. Natl. Acad. Sci. U.S.A.">
        <title>Arabidopsis thaliana AHL family modulates hypocotyl growth redundantly by interacting with each other via the PPC/DUF296 domain.</title>
        <authorList>
            <person name="Zhao J."/>
            <person name="Favero D.S."/>
            <person name="Peng H."/>
            <person name="Neff M.M."/>
        </authorList>
    </citation>
    <scope>GENE FAMILY</scope>
    <scope>DOMAIN PPC</scope>
</reference>
<dbReference type="EMBL" id="AL021635">
    <property type="protein sequence ID" value="CAA16562.1"/>
    <property type="molecule type" value="Genomic_DNA"/>
</dbReference>
<dbReference type="EMBL" id="AL161558">
    <property type="protein sequence ID" value="CAB79232.1"/>
    <property type="molecule type" value="Genomic_DNA"/>
</dbReference>
<dbReference type="EMBL" id="CP002687">
    <property type="protein sequence ID" value="AEE84656.1"/>
    <property type="molecule type" value="Genomic_DNA"/>
</dbReference>
<dbReference type="EMBL" id="CP002687">
    <property type="protein sequence ID" value="ANM66273.1"/>
    <property type="molecule type" value="Genomic_DNA"/>
</dbReference>
<dbReference type="EMBL" id="BT026450">
    <property type="protein sequence ID" value="ABH04557.1"/>
    <property type="molecule type" value="mRNA"/>
</dbReference>
<dbReference type="EMBL" id="AB493692">
    <property type="protein sequence ID" value="BAH30530.1"/>
    <property type="molecule type" value="mRNA"/>
</dbReference>
<dbReference type="EMBL" id="AY084893">
    <property type="protein sequence ID" value="AAM61456.1"/>
    <property type="molecule type" value="mRNA"/>
</dbReference>
<dbReference type="EMBL" id="BR000338">
    <property type="protein sequence ID" value="FAA00273.1"/>
    <property type="molecule type" value="mRNA"/>
</dbReference>
<dbReference type="PIR" id="T04572">
    <property type="entry name" value="T04572"/>
</dbReference>
<dbReference type="RefSeq" id="NP_001328181.1">
    <property type="nucleotide sequence ID" value="NM_001341560.1"/>
</dbReference>
<dbReference type="RefSeq" id="NP_194008.1">
    <property type="nucleotide sequence ID" value="NM_118406.4"/>
</dbReference>
<dbReference type="SMR" id="O49658"/>
<dbReference type="FunCoup" id="O49658">
    <property type="interactions" value="70"/>
</dbReference>
<dbReference type="STRING" id="3702.O49658"/>
<dbReference type="GlyGen" id="O49658">
    <property type="glycosylation" value="3 sites, 1 O-linked glycan (2 sites)"/>
</dbReference>
<dbReference type="iPTMnet" id="O49658"/>
<dbReference type="PaxDb" id="3702-AT4G22770.1"/>
<dbReference type="ProteomicsDB" id="244930"/>
<dbReference type="EnsemblPlants" id="AT4G22770.1">
    <property type="protein sequence ID" value="AT4G22770.1"/>
    <property type="gene ID" value="AT4G22770"/>
</dbReference>
<dbReference type="EnsemblPlants" id="AT4G22770.2">
    <property type="protein sequence ID" value="AT4G22770.2"/>
    <property type="gene ID" value="AT4G22770"/>
</dbReference>
<dbReference type="GeneID" id="828376"/>
<dbReference type="Gramene" id="AT4G22770.1">
    <property type="protein sequence ID" value="AT4G22770.1"/>
    <property type="gene ID" value="AT4G22770"/>
</dbReference>
<dbReference type="Gramene" id="AT4G22770.2">
    <property type="protein sequence ID" value="AT4G22770.2"/>
    <property type="gene ID" value="AT4G22770"/>
</dbReference>
<dbReference type="KEGG" id="ath:AT4G22770"/>
<dbReference type="Araport" id="AT4G22770"/>
<dbReference type="TAIR" id="AT4G22770">
    <property type="gene designation" value="AHL2"/>
</dbReference>
<dbReference type="eggNOG" id="ENOG502QT7J">
    <property type="taxonomic scope" value="Eukaryota"/>
</dbReference>
<dbReference type="HOGENOM" id="CLU_039808_0_0_1"/>
<dbReference type="InParanoid" id="O49658"/>
<dbReference type="OMA" id="NDTWPSM"/>
<dbReference type="OrthoDB" id="2014829at2759"/>
<dbReference type="PhylomeDB" id="O49658"/>
<dbReference type="PRO" id="PR:O49658"/>
<dbReference type="Proteomes" id="UP000006548">
    <property type="component" value="Chromosome 4"/>
</dbReference>
<dbReference type="ExpressionAtlas" id="O49658">
    <property type="expression patterns" value="baseline and differential"/>
</dbReference>
<dbReference type="GO" id="GO:0005634">
    <property type="term" value="C:nucleus"/>
    <property type="evidence" value="ECO:0007669"/>
    <property type="project" value="UniProtKB-SubCell"/>
</dbReference>
<dbReference type="GO" id="GO:0003680">
    <property type="term" value="F:minor groove of adenine-thymine-rich DNA binding"/>
    <property type="evidence" value="ECO:0007669"/>
    <property type="project" value="InterPro"/>
</dbReference>
<dbReference type="CDD" id="cd11378">
    <property type="entry name" value="DUF296"/>
    <property type="match status" value="1"/>
</dbReference>
<dbReference type="FunFam" id="3.30.1330.80:FF:000003">
    <property type="entry name" value="AT-hook motif nuclear-localized protein 1-like"/>
    <property type="match status" value="1"/>
</dbReference>
<dbReference type="Gene3D" id="3.30.1330.80">
    <property type="entry name" value="Hypothetical protein, similar to alpha- acetolactate decarboxylase, domain 2"/>
    <property type="match status" value="1"/>
</dbReference>
<dbReference type="InterPro" id="IPR039605">
    <property type="entry name" value="AHL"/>
</dbReference>
<dbReference type="InterPro" id="IPR005175">
    <property type="entry name" value="PPC_dom"/>
</dbReference>
<dbReference type="PANTHER" id="PTHR31500:SF117">
    <property type="entry name" value="AT-HOOK MOTIF NUCLEAR-LOCALIZED PROTEIN 2"/>
    <property type="match status" value="1"/>
</dbReference>
<dbReference type="PANTHER" id="PTHR31500">
    <property type="entry name" value="AT-HOOK MOTIF NUCLEAR-LOCALIZED PROTEIN 9"/>
    <property type="match status" value="1"/>
</dbReference>
<dbReference type="Pfam" id="PF03479">
    <property type="entry name" value="PCC"/>
    <property type="match status" value="1"/>
</dbReference>
<dbReference type="SUPFAM" id="SSF117856">
    <property type="entry name" value="AF0104/ALDC/Ptd012-like"/>
    <property type="match status" value="1"/>
</dbReference>
<dbReference type="PROSITE" id="PS51742">
    <property type="entry name" value="PPC"/>
    <property type="match status" value="1"/>
</dbReference>
<name>AHL2_ARATH</name>
<feature type="chain" id="PRO_0000432020" description="AT-hook motif nuclear-localized protein 2">
    <location>
        <begin position="1"/>
        <end position="334"/>
    </location>
</feature>
<feature type="domain" description="PPC" evidence="3">
    <location>
        <begin position="147"/>
        <end position="287"/>
    </location>
</feature>
<feature type="DNA-binding region" description="A.T hook" evidence="2">
    <location>
        <begin position="72"/>
        <end position="84"/>
    </location>
</feature>
<feature type="region of interest" description="Disordered" evidence="4">
    <location>
        <begin position="1"/>
        <end position="103"/>
    </location>
</feature>
<feature type="region of interest" description="Disordered" evidence="4">
    <location>
        <begin position="109"/>
        <end position="128"/>
    </location>
</feature>
<feature type="region of interest" description="Disordered" evidence="4">
    <location>
        <begin position="306"/>
        <end position="334"/>
    </location>
</feature>
<feature type="short sequence motif" description="Bipartite nuclear localization signal" evidence="7">
    <location>
        <begin position="72"/>
        <end position="80"/>
    </location>
</feature>
<feature type="compositionally biased region" description="Low complexity" evidence="4">
    <location>
        <begin position="1"/>
        <end position="21"/>
    </location>
</feature>
<feature type="compositionally biased region" description="Pro residues" evidence="4">
    <location>
        <begin position="44"/>
        <end position="54"/>
    </location>
</feature>
<feature type="compositionally biased region" description="Basic residues" evidence="4">
    <location>
        <begin position="71"/>
        <end position="80"/>
    </location>
</feature>
<feature type="compositionally biased region" description="Polar residues" evidence="4">
    <location>
        <begin position="90"/>
        <end position="103"/>
    </location>
</feature>
<feature type="compositionally biased region" description="Polar residues" evidence="4">
    <location>
        <begin position="306"/>
        <end position="319"/>
    </location>
</feature>
<evidence type="ECO:0000250" key="1">
    <source>
        <dbReference type="UniProtKB" id="Q8VYJ2"/>
    </source>
</evidence>
<evidence type="ECO:0000255" key="2"/>
<evidence type="ECO:0000255" key="3">
    <source>
        <dbReference type="PROSITE-ProRule" id="PRU01078"/>
    </source>
</evidence>
<evidence type="ECO:0000256" key="4">
    <source>
        <dbReference type="SAM" id="MobiDB-lite"/>
    </source>
</evidence>
<evidence type="ECO:0000269" key="5">
    <source>
    </source>
</evidence>
<evidence type="ECO:0000303" key="6">
    <source>
    </source>
</evidence>
<evidence type="ECO:0000305" key="7"/>
<evidence type="ECO:0000312" key="8">
    <source>
        <dbReference type="Araport" id="AT4G22770"/>
    </source>
</evidence>
<evidence type="ECO:0000312" key="9">
    <source>
        <dbReference type="EMBL" id="CAA16562.1"/>
    </source>
</evidence>
<evidence type="ECO:0000312" key="10">
    <source>
        <dbReference type="EMBL" id="FAA00273.1"/>
    </source>
</evidence>
<proteinExistence type="evidence at transcript level"/>
<sequence>METTGEVVKTTTGSDGGVTVVRSNAPSDFHMAPRSETSNTPPNSVAPPPPPPPQNSFTPSAAMDGFSSGPIKKRRGRPRKYGHDGAAVTLSPNPISSAAPTTSHVIDFSTTSEKRGKMKPATPTPSSFIRPKYQVENLGEWSPSSAAANFTPHIITVNAGEDVTKRIISFSQQGSLAICVLCANGVVSSVTLRQPDSSGGTLTYEGRFEILSLSGTFMPSDSDGTRSRTGGMSVSLASPDGRVVGGGVAGLLVAATPIQVVVGTFLGGTNQQEQTPKPHNHNFMSSPLMPTSSNVADHRTIRPMTSSLPISTWTPSFPSDSRHKHSHDFNITLT</sequence>